<name>HIS62_VIBVY</name>
<accession>Q7MPP3</accession>
<sequence length="272" mass="30050">MFHMLKIRLIPCIVTKGELVVQSFAFKNYLPIGNVKTAIDFFVNWDVDEIIVNDIDASKEFREPNVDLVSWAAKECFVPLTVGGGIKTLEHIRNLLKAGADKVTINTKAIDDPDFIKNAASVFGSQCITVSVDAIKQGNVYKLYDYRDGRVLDVDVVDWVRKVESYGAGEILLNSVDRDGSREGYDVELLKTVSGIVSIPVIALGGIGRFDQLAEGAIEGGCQALSAANIFQHMEHSTIAAKAQMRNAKLNVRLSSKVKYENFDLDFLGRPY</sequence>
<feature type="chain" id="PRO_0000142262" description="Putative imidazole glycerol phosphate synthase subunit hisF2">
    <location>
        <begin position="1"/>
        <end position="272"/>
    </location>
</feature>
<feature type="active site" evidence="2">
    <location>
        <position position="133"/>
    </location>
</feature>
<organism>
    <name type="scientific">Vibrio vulnificus (strain YJ016)</name>
    <dbReference type="NCBI Taxonomy" id="196600"/>
    <lineage>
        <taxon>Bacteria</taxon>
        <taxon>Pseudomonadati</taxon>
        <taxon>Pseudomonadota</taxon>
        <taxon>Gammaproteobacteria</taxon>
        <taxon>Vibrionales</taxon>
        <taxon>Vibrionaceae</taxon>
        <taxon>Vibrio</taxon>
    </lineage>
</organism>
<gene>
    <name type="primary">hisF2</name>
    <name type="ordered locus">VV0319</name>
</gene>
<protein>
    <recommendedName>
        <fullName>Putative imidazole glycerol phosphate synthase subunit hisF2</fullName>
        <ecNumber>4.3.2.10</ecNumber>
    </recommendedName>
    <alternativeName>
        <fullName>IGP synthase cyclase subunit</fullName>
    </alternativeName>
    <alternativeName>
        <fullName>IGP synthase subunit hisF2</fullName>
    </alternativeName>
    <alternativeName>
        <fullName>ImGP synthase subunit hisF2</fullName>
        <shortName>IGPS subunit hisF2</shortName>
    </alternativeName>
</protein>
<reference key="1">
    <citation type="journal article" date="2003" name="Genome Res.">
        <title>Comparative genome analysis of Vibrio vulnificus, a marine pathogen.</title>
        <authorList>
            <person name="Chen C.-Y."/>
            <person name="Wu K.-M."/>
            <person name="Chang Y.-C."/>
            <person name="Chang C.-H."/>
            <person name="Tsai H.-C."/>
            <person name="Liao T.-L."/>
            <person name="Liu Y.-M."/>
            <person name="Chen H.-J."/>
            <person name="Shen A.B.-T."/>
            <person name="Li J.-C."/>
            <person name="Su T.-L."/>
            <person name="Shao C.-P."/>
            <person name="Lee C.-T."/>
            <person name="Hor L.-I."/>
            <person name="Tsai S.-F."/>
        </authorList>
    </citation>
    <scope>NUCLEOTIDE SEQUENCE [LARGE SCALE GENOMIC DNA]</scope>
    <source>
        <strain>YJ016</strain>
    </source>
</reference>
<dbReference type="EC" id="4.3.2.10"/>
<dbReference type="EMBL" id="BA000037">
    <property type="protein sequence ID" value="BAC93083.1"/>
    <property type="molecule type" value="Genomic_DNA"/>
</dbReference>
<dbReference type="SMR" id="Q7MPP3"/>
<dbReference type="KEGG" id="vvy:VV0319"/>
<dbReference type="HOGENOM" id="CLU_048577_4_0_6"/>
<dbReference type="UniPathway" id="UPA00031">
    <property type="reaction ID" value="UER00010"/>
</dbReference>
<dbReference type="Proteomes" id="UP000002675">
    <property type="component" value="Chromosome I"/>
</dbReference>
<dbReference type="GO" id="GO:0005737">
    <property type="term" value="C:cytoplasm"/>
    <property type="evidence" value="ECO:0007669"/>
    <property type="project" value="UniProtKB-SubCell"/>
</dbReference>
<dbReference type="GO" id="GO:0000107">
    <property type="term" value="F:imidazoleglycerol-phosphate synthase activity"/>
    <property type="evidence" value="ECO:0007669"/>
    <property type="project" value="InterPro"/>
</dbReference>
<dbReference type="GO" id="GO:0016833">
    <property type="term" value="F:oxo-acid-lyase activity"/>
    <property type="evidence" value="ECO:0007669"/>
    <property type="project" value="InterPro"/>
</dbReference>
<dbReference type="GO" id="GO:0000105">
    <property type="term" value="P:L-histidine biosynthetic process"/>
    <property type="evidence" value="ECO:0007669"/>
    <property type="project" value="UniProtKB-UniPathway"/>
</dbReference>
<dbReference type="CDD" id="cd04731">
    <property type="entry name" value="HisF"/>
    <property type="match status" value="1"/>
</dbReference>
<dbReference type="Gene3D" id="3.20.20.70">
    <property type="entry name" value="Aldolase class I"/>
    <property type="match status" value="1"/>
</dbReference>
<dbReference type="InterPro" id="IPR013785">
    <property type="entry name" value="Aldolase_TIM"/>
</dbReference>
<dbReference type="InterPro" id="IPR020021">
    <property type="entry name" value="Glycosyl_amidation-assoc_WbuZ"/>
</dbReference>
<dbReference type="InterPro" id="IPR006062">
    <property type="entry name" value="His_biosynth"/>
</dbReference>
<dbReference type="InterPro" id="IPR004651">
    <property type="entry name" value="HisF"/>
</dbReference>
<dbReference type="InterPro" id="IPR050064">
    <property type="entry name" value="IGPS_HisA/HisF"/>
</dbReference>
<dbReference type="InterPro" id="IPR011060">
    <property type="entry name" value="RibuloseP-bd_barrel"/>
</dbReference>
<dbReference type="NCBIfam" id="TIGR03572">
    <property type="entry name" value="WbuZ"/>
    <property type="match status" value="1"/>
</dbReference>
<dbReference type="PANTHER" id="PTHR21235:SF2">
    <property type="entry name" value="IMIDAZOLE GLYCEROL PHOSPHATE SYNTHASE HISHF"/>
    <property type="match status" value="1"/>
</dbReference>
<dbReference type="PANTHER" id="PTHR21235">
    <property type="entry name" value="IMIDAZOLE GLYCEROL PHOSPHATE SYNTHASE SUBUNIT HISF/H IGP SYNTHASE SUBUNIT HISF/H"/>
    <property type="match status" value="1"/>
</dbReference>
<dbReference type="Pfam" id="PF00977">
    <property type="entry name" value="His_biosynth"/>
    <property type="match status" value="1"/>
</dbReference>
<dbReference type="SUPFAM" id="SSF51366">
    <property type="entry name" value="Ribulose-phoshate binding barrel"/>
    <property type="match status" value="1"/>
</dbReference>
<proteinExistence type="inferred from homology"/>
<keyword id="KW-0028">Amino-acid biosynthesis</keyword>
<keyword id="KW-0963">Cytoplasm</keyword>
<keyword id="KW-0368">Histidine biosynthesis</keyword>
<keyword id="KW-0456">Lyase</keyword>
<comment type="function">
    <text evidence="1">IGPS catalyzes the conversion of PRFAR and glutamine to IGP, AICAR and glutamate. The HisF subunit catalyzes the cyclization activity that produces IGP and AICAR from PRFAR using the ammonia provided by the HisH subunit (By similarity).</text>
</comment>
<comment type="catalytic activity">
    <reaction>
        <text>5-[(5-phospho-1-deoxy-D-ribulos-1-ylimino)methylamino]-1-(5-phospho-beta-D-ribosyl)imidazole-4-carboxamide + L-glutamine = D-erythro-1-(imidazol-4-yl)glycerol 3-phosphate + 5-amino-1-(5-phospho-beta-D-ribosyl)imidazole-4-carboxamide + L-glutamate + H(+)</text>
        <dbReference type="Rhea" id="RHEA:24793"/>
        <dbReference type="ChEBI" id="CHEBI:15378"/>
        <dbReference type="ChEBI" id="CHEBI:29985"/>
        <dbReference type="ChEBI" id="CHEBI:58278"/>
        <dbReference type="ChEBI" id="CHEBI:58359"/>
        <dbReference type="ChEBI" id="CHEBI:58475"/>
        <dbReference type="ChEBI" id="CHEBI:58525"/>
        <dbReference type="EC" id="4.3.2.10"/>
    </reaction>
</comment>
<comment type="pathway">
    <text>Amino-acid biosynthesis; L-histidine biosynthesis; L-histidine from 5-phospho-alpha-D-ribose 1-diphosphate: step 5/9.</text>
</comment>
<comment type="subunit">
    <text evidence="1">Heterodimer of HisH and HisF.</text>
</comment>
<comment type="subcellular location">
    <subcellularLocation>
        <location evidence="1">Cytoplasm</location>
    </subcellularLocation>
</comment>
<comment type="similarity">
    <text evidence="3">Belongs to the HisA/HisF family.</text>
</comment>
<comment type="caution">
    <text evidence="3">The potential active site Asp residue in position 14 is replaced by a Val.</text>
</comment>
<evidence type="ECO:0000250" key="1"/>
<evidence type="ECO:0000255" key="2"/>
<evidence type="ECO:0000305" key="3"/>